<evidence type="ECO:0000255" key="1">
    <source>
        <dbReference type="HAMAP-Rule" id="MF_01177"/>
    </source>
</evidence>
<gene>
    <name evidence="1" type="primary">nsrR</name>
    <name type="ordered locus">SFV_4336</name>
</gene>
<comment type="function">
    <text evidence="1">Nitric oxide-sensitive repressor of genes involved in protecting the cell against nitrosative stress. May require iron for activity.</text>
</comment>
<comment type="cofactor">
    <cofactor evidence="1">
        <name>[2Fe-2S] cluster</name>
        <dbReference type="ChEBI" id="CHEBI:190135"/>
    </cofactor>
    <text evidence="1">Binds 1 [2Fe-2S] cluster per subunit.</text>
</comment>
<keyword id="KW-0001">2Fe-2S</keyword>
<keyword id="KW-0238">DNA-binding</keyword>
<keyword id="KW-0408">Iron</keyword>
<keyword id="KW-0411">Iron-sulfur</keyword>
<keyword id="KW-0479">Metal-binding</keyword>
<keyword id="KW-0678">Repressor</keyword>
<keyword id="KW-0804">Transcription</keyword>
<keyword id="KW-0805">Transcription regulation</keyword>
<name>NSRR_SHIF8</name>
<sequence>MQLTSFTDYGLRALIYMASLPEGRMTSISEVTDVYGVSRNHMVKIINQLSRAGYVTAVRGKNGGIRLGKPASAIRIGDVVRELEPLSLVNCSSEFCHITPACRLKQALSKAVQSFLTELDNYTLADLVEENQPLYKLLLVE</sequence>
<organism>
    <name type="scientific">Shigella flexneri serotype 5b (strain 8401)</name>
    <dbReference type="NCBI Taxonomy" id="373384"/>
    <lineage>
        <taxon>Bacteria</taxon>
        <taxon>Pseudomonadati</taxon>
        <taxon>Pseudomonadota</taxon>
        <taxon>Gammaproteobacteria</taxon>
        <taxon>Enterobacterales</taxon>
        <taxon>Enterobacteriaceae</taxon>
        <taxon>Shigella</taxon>
    </lineage>
</organism>
<reference key="1">
    <citation type="journal article" date="2006" name="BMC Genomics">
        <title>Complete genome sequence of Shigella flexneri 5b and comparison with Shigella flexneri 2a.</title>
        <authorList>
            <person name="Nie H."/>
            <person name="Yang F."/>
            <person name="Zhang X."/>
            <person name="Yang J."/>
            <person name="Chen L."/>
            <person name="Wang J."/>
            <person name="Xiong Z."/>
            <person name="Peng J."/>
            <person name="Sun L."/>
            <person name="Dong J."/>
            <person name="Xue Y."/>
            <person name="Xu X."/>
            <person name="Chen S."/>
            <person name="Yao Z."/>
            <person name="Shen Y."/>
            <person name="Jin Q."/>
        </authorList>
    </citation>
    <scope>NUCLEOTIDE SEQUENCE [LARGE SCALE GENOMIC DNA]</scope>
    <source>
        <strain>8401</strain>
    </source>
</reference>
<accession>Q0SXA4</accession>
<protein>
    <recommendedName>
        <fullName evidence="1">HTH-type transcriptional repressor NsrR</fullName>
    </recommendedName>
</protein>
<proteinExistence type="inferred from homology"/>
<feature type="chain" id="PRO_1000085438" description="HTH-type transcriptional repressor NsrR">
    <location>
        <begin position="1"/>
        <end position="141"/>
    </location>
</feature>
<feature type="domain" description="HTH rrf2-type" evidence="1">
    <location>
        <begin position="2"/>
        <end position="129"/>
    </location>
</feature>
<feature type="DNA-binding region" description="H-T-H motif" evidence="1">
    <location>
        <begin position="28"/>
        <end position="51"/>
    </location>
</feature>
<feature type="binding site" evidence="1">
    <location>
        <position position="91"/>
    </location>
    <ligand>
        <name>[2Fe-2S] cluster</name>
        <dbReference type="ChEBI" id="CHEBI:190135"/>
    </ligand>
</feature>
<feature type="binding site" evidence="1">
    <location>
        <position position="96"/>
    </location>
    <ligand>
        <name>[2Fe-2S] cluster</name>
        <dbReference type="ChEBI" id="CHEBI:190135"/>
    </ligand>
</feature>
<feature type="binding site" evidence="1">
    <location>
        <position position="102"/>
    </location>
    <ligand>
        <name>[2Fe-2S] cluster</name>
        <dbReference type="ChEBI" id="CHEBI:190135"/>
    </ligand>
</feature>
<dbReference type="EMBL" id="CP000266">
    <property type="protein sequence ID" value="ABF06311.1"/>
    <property type="molecule type" value="Genomic_DNA"/>
</dbReference>
<dbReference type="RefSeq" id="WP_001177639.1">
    <property type="nucleotide sequence ID" value="NC_008258.1"/>
</dbReference>
<dbReference type="SMR" id="Q0SXA4"/>
<dbReference type="GeneID" id="93777643"/>
<dbReference type="KEGG" id="sfv:SFV_4336"/>
<dbReference type="HOGENOM" id="CLU_107144_2_1_6"/>
<dbReference type="Proteomes" id="UP000000659">
    <property type="component" value="Chromosome"/>
</dbReference>
<dbReference type="GO" id="GO:0005829">
    <property type="term" value="C:cytosol"/>
    <property type="evidence" value="ECO:0007669"/>
    <property type="project" value="TreeGrafter"/>
</dbReference>
<dbReference type="GO" id="GO:0051537">
    <property type="term" value="F:2 iron, 2 sulfur cluster binding"/>
    <property type="evidence" value="ECO:0007669"/>
    <property type="project" value="UniProtKB-KW"/>
</dbReference>
<dbReference type="GO" id="GO:0003700">
    <property type="term" value="F:DNA-binding transcription factor activity"/>
    <property type="evidence" value="ECO:0007669"/>
    <property type="project" value="UniProtKB-UniRule"/>
</dbReference>
<dbReference type="GO" id="GO:0003690">
    <property type="term" value="F:double-stranded DNA binding"/>
    <property type="evidence" value="ECO:0007669"/>
    <property type="project" value="UniProtKB-UniRule"/>
</dbReference>
<dbReference type="GO" id="GO:0005506">
    <property type="term" value="F:iron ion binding"/>
    <property type="evidence" value="ECO:0007669"/>
    <property type="project" value="UniProtKB-UniRule"/>
</dbReference>
<dbReference type="GO" id="GO:0045892">
    <property type="term" value="P:negative regulation of DNA-templated transcription"/>
    <property type="evidence" value="ECO:0007669"/>
    <property type="project" value="InterPro"/>
</dbReference>
<dbReference type="FunFam" id="1.10.10.10:FF:000105">
    <property type="entry name" value="HTH-type transcriptional repressor NsrR"/>
    <property type="match status" value="1"/>
</dbReference>
<dbReference type="Gene3D" id="1.10.10.10">
    <property type="entry name" value="Winged helix-like DNA-binding domain superfamily/Winged helix DNA-binding domain"/>
    <property type="match status" value="1"/>
</dbReference>
<dbReference type="HAMAP" id="MF_01177">
    <property type="entry name" value="HTH_type_NsrR"/>
    <property type="match status" value="1"/>
</dbReference>
<dbReference type="InterPro" id="IPR030489">
    <property type="entry name" value="TR_Rrf2-type_CS"/>
</dbReference>
<dbReference type="InterPro" id="IPR000944">
    <property type="entry name" value="Tscrpt_reg_Rrf2"/>
</dbReference>
<dbReference type="InterPro" id="IPR023761">
    <property type="entry name" value="Tscrpt_rep_HTH_NsrR"/>
</dbReference>
<dbReference type="InterPro" id="IPR036388">
    <property type="entry name" value="WH-like_DNA-bd_sf"/>
</dbReference>
<dbReference type="InterPro" id="IPR036390">
    <property type="entry name" value="WH_DNA-bd_sf"/>
</dbReference>
<dbReference type="NCBIfam" id="NF008240">
    <property type="entry name" value="PRK11014.1"/>
    <property type="match status" value="1"/>
</dbReference>
<dbReference type="NCBIfam" id="TIGR00738">
    <property type="entry name" value="rrf2_super"/>
    <property type="match status" value="1"/>
</dbReference>
<dbReference type="PANTHER" id="PTHR33221:SF4">
    <property type="entry name" value="HTH-TYPE TRANSCRIPTIONAL REPRESSOR NSRR"/>
    <property type="match status" value="1"/>
</dbReference>
<dbReference type="PANTHER" id="PTHR33221">
    <property type="entry name" value="WINGED HELIX-TURN-HELIX TRANSCRIPTIONAL REGULATOR, RRF2 FAMILY"/>
    <property type="match status" value="1"/>
</dbReference>
<dbReference type="Pfam" id="PF02082">
    <property type="entry name" value="Rrf2"/>
    <property type="match status" value="1"/>
</dbReference>
<dbReference type="SUPFAM" id="SSF46785">
    <property type="entry name" value="Winged helix' DNA-binding domain"/>
    <property type="match status" value="1"/>
</dbReference>
<dbReference type="PROSITE" id="PS01332">
    <property type="entry name" value="HTH_RRF2_1"/>
    <property type="match status" value="1"/>
</dbReference>
<dbReference type="PROSITE" id="PS51197">
    <property type="entry name" value="HTH_RRF2_2"/>
    <property type="match status" value="1"/>
</dbReference>